<keyword id="KW-0929">Antimicrobial</keyword>
<keyword id="KW-0165">Cleavage on pair of basic residues</keyword>
<keyword id="KW-0964">Secreted</keyword>
<keyword id="KW-0732">Signal</keyword>
<accession>E4VP11</accession>
<organism>
    <name type="scientific">Mesobuthus eupeus</name>
    <name type="common">Lesser Asian scorpion</name>
    <name type="synonym">Buthus eupeus</name>
    <dbReference type="NCBI Taxonomy" id="34648"/>
    <lineage>
        <taxon>Eukaryota</taxon>
        <taxon>Metazoa</taxon>
        <taxon>Ecdysozoa</taxon>
        <taxon>Arthropoda</taxon>
        <taxon>Chelicerata</taxon>
        <taxon>Arachnida</taxon>
        <taxon>Scorpiones</taxon>
        <taxon>Buthida</taxon>
        <taxon>Buthoidea</taxon>
        <taxon>Buthidae</taxon>
        <taxon>Mesobuthus</taxon>
    </lineage>
</organism>
<dbReference type="EMBL" id="EF442059">
    <property type="protein sequence ID" value="ABR20124.1"/>
    <property type="molecule type" value="mRNA"/>
</dbReference>
<dbReference type="GO" id="GO:0005576">
    <property type="term" value="C:extracellular region"/>
    <property type="evidence" value="ECO:0007669"/>
    <property type="project" value="UniProtKB-SubCell"/>
</dbReference>
<protein>
    <recommendedName>
        <fullName evidence="3">Antimicrobial peptide Meucin-49-1</fullName>
    </recommendedName>
    <alternativeName>
        <fullName evidence="3">Venom antimicrobial peptide</fullName>
        <shortName evidence="6">VAMP-3</shortName>
    </alternativeName>
</protein>
<proteinExistence type="inferred from homology"/>
<name>NDB21_MESEU</name>
<comment type="function">
    <text evidence="1">Antimicrobial peptide.</text>
</comment>
<comment type="subcellular location">
    <subcellularLocation>
        <location evidence="5">Secreted</location>
    </subcellularLocation>
</comment>
<comment type="tissue specificity">
    <text evidence="5">Expressed by the venom gland.</text>
</comment>
<comment type="domain">
    <text evidence="1">Amphipathic and cationic peptide with an alpha-helical structure.</text>
</comment>
<comment type="similarity">
    <text evidence="4">Belongs to the non-disulfide-bridged peptide (NDBP) superfamily. Long chain multifunctional peptide (group 2) family.</text>
</comment>
<feature type="signal peptide" evidence="2">
    <location>
        <begin position="1"/>
        <end position="22"/>
    </location>
</feature>
<feature type="chain" id="PRO_5003191174" description="Antimicrobial peptide Meucin-49-1">
    <location>
        <begin position="23"/>
        <end position="71"/>
    </location>
</feature>
<evidence type="ECO:0000250" key="1">
    <source>
        <dbReference type="UniProtKB" id="P86407"/>
    </source>
</evidence>
<evidence type="ECO:0000255" key="2"/>
<evidence type="ECO:0000303" key="3">
    <source>
    </source>
</evidence>
<evidence type="ECO:0000305" key="4"/>
<evidence type="ECO:0000305" key="5">
    <source>
    </source>
</evidence>
<evidence type="ECO:0000312" key="6">
    <source>
        <dbReference type="EMBL" id="ABR20124.1"/>
    </source>
</evidence>
<reference evidence="6" key="1">
    <citation type="journal article" date="2018" name="Amino Acids">
        <title>Meucin-49, a multifunctional scorpion venom peptide with bactericidal synergy with neurotoxins.</title>
        <authorList>
            <person name="Gao B."/>
            <person name="Dalziel J."/>
            <person name="Tanzi S."/>
            <person name="Zhu S."/>
        </authorList>
    </citation>
    <scope>NUCLEOTIDE SEQUENCE [MRNA]</scope>
    <source>
        <tissue>Venom gland</tissue>
    </source>
</reference>
<sequence>MNKKILLVIFIVTMLIVDEVNSFEFGSFIKRMWRSKLAKKLRAKGKELLRDYANRVLSPEEEAAAPAPVPAKRRR</sequence>